<reference key="1">
    <citation type="journal article" date="2003" name="Nucleic Acids Res.">
        <title>The complete nucleotide sequence of the hornwort (Anthoceros formosae) chloroplast genome: insight into the earliest land plants.</title>
        <authorList>
            <person name="Kugita M."/>
            <person name="Kaneko A."/>
            <person name="Yamamoto Y."/>
            <person name="Takeya Y."/>
            <person name="Matsumoto T."/>
            <person name="Yoshinaga K."/>
        </authorList>
    </citation>
    <scope>NUCLEOTIDE SEQUENCE [LARGE SCALE GENOMIC DNA]</scope>
    <scope>RNA EDITING</scope>
</reference>
<reference key="2">
    <citation type="journal article" date="2003" name="Nucleic Acids Res.">
        <title>RNA editing in hornwort chloroplasts makes more than half the genes functional.</title>
        <authorList>
            <person name="Kugita M."/>
            <person name="Yamamoto Y."/>
            <person name="Fujikawa T."/>
            <person name="Matsumoto T."/>
            <person name="Yoshinaga K."/>
        </authorList>
    </citation>
    <scope>NUCLEOTIDE SEQUENCE [MRNA]</scope>
    <scope>RNA EDITING</scope>
    <source>
        <tissue>Thallus</tissue>
    </source>
</reference>
<comment type="function">
    <text evidence="1">NDH shuttles electrons from NAD(P)H:plastoquinone, via FMN and iron-sulfur (Fe-S) centers, to quinones in the photosynthetic chain and possibly in a chloroplast respiratory chain. The immediate electron acceptor for the enzyme in this species is believed to be plastoquinone. Couples the redox reaction to proton translocation, and thus conserves the redox energy in a proton gradient.</text>
</comment>
<comment type="catalytic activity">
    <reaction evidence="1">
        <text>a plastoquinone + NADH + (n+1) H(+)(in) = a plastoquinol + NAD(+) + n H(+)(out)</text>
        <dbReference type="Rhea" id="RHEA:42608"/>
        <dbReference type="Rhea" id="RHEA-COMP:9561"/>
        <dbReference type="Rhea" id="RHEA-COMP:9562"/>
        <dbReference type="ChEBI" id="CHEBI:15378"/>
        <dbReference type="ChEBI" id="CHEBI:17757"/>
        <dbReference type="ChEBI" id="CHEBI:57540"/>
        <dbReference type="ChEBI" id="CHEBI:57945"/>
        <dbReference type="ChEBI" id="CHEBI:62192"/>
    </reaction>
</comment>
<comment type="catalytic activity">
    <reaction evidence="1">
        <text>a plastoquinone + NADPH + (n+1) H(+)(in) = a plastoquinol + NADP(+) + n H(+)(out)</text>
        <dbReference type="Rhea" id="RHEA:42612"/>
        <dbReference type="Rhea" id="RHEA-COMP:9561"/>
        <dbReference type="Rhea" id="RHEA-COMP:9562"/>
        <dbReference type="ChEBI" id="CHEBI:15378"/>
        <dbReference type="ChEBI" id="CHEBI:17757"/>
        <dbReference type="ChEBI" id="CHEBI:57783"/>
        <dbReference type="ChEBI" id="CHEBI:58349"/>
        <dbReference type="ChEBI" id="CHEBI:62192"/>
    </reaction>
</comment>
<comment type="cofactor">
    <cofactor evidence="1">
        <name>[4Fe-4S] cluster</name>
        <dbReference type="ChEBI" id="CHEBI:49883"/>
    </cofactor>
    <text evidence="1">Binds 2 [4Fe-4S] clusters per subunit.</text>
</comment>
<comment type="subunit">
    <text evidence="1">NDH is composed of at least 16 different subunits, 5 of which are encoded in the nucleus.</text>
</comment>
<comment type="subcellular location">
    <subcellularLocation>
        <location evidence="1">Plastid</location>
        <location evidence="1">Chloroplast thylakoid membrane</location>
        <topology evidence="1">Peripheral membrane protein</topology>
    </subcellularLocation>
</comment>
<comment type="RNA editing">
    <location>
        <position position="30" evidence="2 3"/>
    </location>
    <location>
        <position position="52" evidence="2 3"/>
    </location>
    <location>
        <position position="132" evidence="2 3"/>
    </location>
    <location>
        <position position="135" evidence="2 3"/>
    </location>
    <location>
        <position position="139" evidence="2 3"/>
    </location>
    <location>
        <position position="142" evidence="2 3"/>
    </location>
    <text>The nonsense codons in positions 52 and 139 are modified to sense codons.</text>
</comment>
<comment type="similarity">
    <text evidence="1">Belongs to the complex I 23 kDa subunit family.</text>
</comment>
<protein>
    <recommendedName>
        <fullName evidence="1">NAD(P)H-quinone oxidoreductase subunit I, chloroplastic</fullName>
        <ecNumber evidence="1">7.1.1.-</ecNumber>
    </recommendedName>
    <alternativeName>
        <fullName evidence="1">NAD(P)H dehydrogenase subunit I</fullName>
        <shortName evidence="1">NDH subunit I</shortName>
    </alternativeName>
    <alternativeName>
        <fullName evidence="1">NADH-plastoquinone oxidoreductase subunit I</fullName>
    </alternativeName>
</protein>
<evidence type="ECO:0000255" key="1">
    <source>
        <dbReference type="HAMAP-Rule" id="MF_01351"/>
    </source>
</evidence>
<evidence type="ECO:0000269" key="2">
    <source>
    </source>
</evidence>
<evidence type="ECO:0000269" key="3">
    <source>
    </source>
</evidence>
<organism>
    <name type="scientific">Anthoceros angustus</name>
    <name type="common">Hornwort</name>
    <name type="synonym">Anthoceros formosae</name>
    <dbReference type="NCBI Taxonomy" id="48387"/>
    <lineage>
        <taxon>Eukaryota</taxon>
        <taxon>Viridiplantae</taxon>
        <taxon>Streptophyta</taxon>
        <taxon>Embryophyta</taxon>
        <taxon>Anthocerotophyta</taxon>
        <taxon>Anthocerotopsida</taxon>
        <taxon>Anthocerotidae</taxon>
        <taxon>Anthocerotales</taxon>
        <taxon>Anthocerotaceae</taxon>
        <taxon>Anthoceros</taxon>
    </lineage>
</organism>
<geneLocation type="chloroplast"/>
<feature type="chain" id="PRO_0000118703" description="NAD(P)H-quinone oxidoreductase subunit I, chloroplastic">
    <location>
        <begin position="1"/>
        <end position="183"/>
    </location>
</feature>
<feature type="domain" description="4Fe-4S ferredoxin-type 1" evidence="1">
    <location>
        <begin position="55"/>
        <end position="84"/>
    </location>
</feature>
<feature type="domain" description="4Fe-4S ferredoxin-type 2" evidence="1">
    <location>
        <begin position="95"/>
        <end position="124"/>
    </location>
</feature>
<feature type="binding site" evidence="1">
    <location>
        <position position="64"/>
    </location>
    <ligand>
        <name>[4Fe-4S] cluster</name>
        <dbReference type="ChEBI" id="CHEBI:49883"/>
        <label>1</label>
    </ligand>
</feature>
<feature type="binding site" evidence="1">
    <location>
        <position position="67"/>
    </location>
    <ligand>
        <name>[4Fe-4S] cluster</name>
        <dbReference type="ChEBI" id="CHEBI:49883"/>
        <label>1</label>
    </ligand>
</feature>
<feature type="binding site" evidence="1">
    <location>
        <position position="70"/>
    </location>
    <ligand>
        <name>[4Fe-4S] cluster</name>
        <dbReference type="ChEBI" id="CHEBI:49883"/>
        <label>1</label>
    </ligand>
</feature>
<feature type="binding site" evidence="1">
    <location>
        <position position="74"/>
    </location>
    <ligand>
        <name>[4Fe-4S] cluster</name>
        <dbReference type="ChEBI" id="CHEBI:49883"/>
        <label>2</label>
    </ligand>
</feature>
<feature type="binding site" evidence="1">
    <location>
        <position position="104"/>
    </location>
    <ligand>
        <name>[4Fe-4S] cluster</name>
        <dbReference type="ChEBI" id="CHEBI:49883"/>
        <label>2</label>
    </ligand>
</feature>
<feature type="binding site" evidence="1">
    <location>
        <position position="107"/>
    </location>
    <ligand>
        <name>[4Fe-4S] cluster</name>
        <dbReference type="ChEBI" id="CHEBI:49883"/>
        <label>2</label>
    </ligand>
</feature>
<feature type="binding site" evidence="1">
    <location>
        <position position="110"/>
    </location>
    <ligand>
        <name>[4Fe-4S] cluster</name>
        <dbReference type="ChEBI" id="CHEBI:49883"/>
        <label>2</label>
    </ligand>
</feature>
<feature type="binding site" evidence="1">
    <location>
        <position position="114"/>
    </location>
    <ligand>
        <name>[4Fe-4S] cluster</name>
        <dbReference type="ChEBI" id="CHEBI:49883"/>
        <label>1</label>
    </ligand>
</feature>
<dbReference type="EC" id="7.1.1.-" evidence="1"/>
<dbReference type="EMBL" id="AB086179">
    <property type="protein sequence ID" value="BAC55405.1"/>
    <property type="molecule type" value="Genomic_DNA"/>
</dbReference>
<dbReference type="EMBL" id="AB087489">
    <property type="protein sequence ID" value="BAC55505.1"/>
    <property type="molecule type" value="mRNA"/>
</dbReference>
<dbReference type="RefSeq" id="NP_777468.1">
    <property type="nucleotide sequence ID" value="NC_004543.1"/>
</dbReference>
<dbReference type="SMR" id="Q85A84"/>
<dbReference type="GeneID" id="2553502"/>
<dbReference type="GO" id="GO:0009535">
    <property type="term" value="C:chloroplast thylakoid membrane"/>
    <property type="evidence" value="ECO:0007669"/>
    <property type="project" value="UniProtKB-SubCell"/>
</dbReference>
<dbReference type="GO" id="GO:0051539">
    <property type="term" value="F:4 iron, 4 sulfur cluster binding"/>
    <property type="evidence" value="ECO:0007669"/>
    <property type="project" value="UniProtKB-KW"/>
</dbReference>
<dbReference type="GO" id="GO:0005506">
    <property type="term" value="F:iron ion binding"/>
    <property type="evidence" value="ECO:0007669"/>
    <property type="project" value="UniProtKB-UniRule"/>
</dbReference>
<dbReference type="GO" id="GO:0008137">
    <property type="term" value="F:NADH dehydrogenase (ubiquinone) activity"/>
    <property type="evidence" value="ECO:0007669"/>
    <property type="project" value="InterPro"/>
</dbReference>
<dbReference type="GO" id="GO:0048038">
    <property type="term" value="F:quinone binding"/>
    <property type="evidence" value="ECO:0007669"/>
    <property type="project" value="UniProtKB-KW"/>
</dbReference>
<dbReference type="GO" id="GO:0019684">
    <property type="term" value="P:photosynthesis, light reaction"/>
    <property type="evidence" value="ECO:0007669"/>
    <property type="project" value="UniProtKB-UniRule"/>
</dbReference>
<dbReference type="Gene3D" id="3.30.70.3270">
    <property type="match status" value="1"/>
</dbReference>
<dbReference type="HAMAP" id="MF_01351">
    <property type="entry name" value="NDH1_NuoI"/>
    <property type="match status" value="1"/>
</dbReference>
<dbReference type="InterPro" id="IPR017896">
    <property type="entry name" value="4Fe4S_Fe-S-bd"/>
</dbReference>
<dbReference type="InterPro" id="IPR017900">
    <property type="entry name" value="4Fe4S_Fe_S_CS"/>
</dbReference>
<dbReference type="InterPro" id="IPR010226">
    <property type="entry name" value="NADH_quinone_OxRdtase_chainI"/>
</dbReference>
<dbReference type="InterPro" id="IPR004497">
    <property type="entry name" value="NDHI"/>
</dbReference>
<dbReference type="NCBIfam" id="TIGR00403">
    <property type="entry name" value="ndhI"/>
    <property type="match status" value="1"/>
</dbReference>
<dbReference type="NCBIfam" id="TIGR01971">
    <property type="entry name" value="NuoI"/>
    <property type="match status" value="1"/>
</dbReference>
<dbReference type="NCBIfam" id="NF004537">
    <property type="entry name" value="PRK05888.1-3"/>
    <property type="match status" value="1"/>
</dbReference>
<dbReference type="PANTHER" id="PTHR47275">
    <property type="entry name" value="NAD(P)H-QUINONE OXIDOREDUCTASE SUBUNIT I, CHLOROPLASTIC"/>
    <property type="match status" value="1"/>
</dbReference>
<dbReference type="PANTHER" id="PTHR47275:SF1">
    <property type="entry name" value="NAD(P)H-QUINONE OXIDOREDUCTASE SUBUNIT I, CHLOROPLASTIC"/>
    <property type="match status" value="1"/>
</dbReference>
<dbReference type="Pfam" id="PF12838">
    <property type="entry name" value="Fer4_7"/>
    <property type="match status" value="1"/>
</dbReference>
<dbReference type="SUPFAM" id="SSF54862">
    <property type="entry name" value="4Fe-4S ferredoxins"/>
    <property type="match status" value="1"/>
</dbReference>
<dbReference type="PROSITE" id="PS00198">
    <property type="entry name" value="4FE4S_FER_1"/>
    <property type="match status" value="2"/>
</dbReference>
<dbReference type="PROSITE" id="PS51379">
    <property type="entry name" value="4FE4S_FER_2"/>
    <property type="match status" value="2"/>
</dbReference>
<keyword id="KW-0004">4Fe-4S</keyword>
<keyword id="KW-0150">Chloroplast</keyword>
<keyword id="KW-0408">Iron</keyword>
<keyword id="KW-0411">Iron-sulfur</keyword>
<keyword id="KW-0472">Membrane</keyword>
<keyword id="KW-0479">Metal-binding</keyword>
<keyword id="KW-0520">NAD</keyword>
<keyword id="KW-0521">NADP</keyword>
<keyword id="KW-0934">Plastid</keyword>
<keyword id="KW-0618">Plastoquinone</keyword>
<keyword id="KW-0874">Quinone</keyword>
<keyword id="KW-0677">Repeat</keyword>
<keyword id="KW-0691">RNA editing</keyword>
<keyword id="KW-0793">Thylakoid</keyword>
<keyword id="KW-1278">Translocase</keyword>
<name>NDHI_ANTAG</name>
<gene>
    <name evidence="1" type="primary">ndhI</name>
</gene>
<sequence>MFSMVNGFRNYSQQAIQASRYIGQGFIVTLDHMNRLPMTIQYPYEKLVPSERFRGRIHFEFDKCIACEVCVRVCPINLPVVDWKFKKDIKKKQLKSYSIDFGVCIFCGNCVEYCPTNCLSMTEEYELSTYDRHELNYDQIALGRLPISIIEDRTIESISSFDFSSKKIMEEHSKSRTVTKFLD</sequence>
<proteinExistence type="evidence at transcript level"/>
<accession>Q85A84</accession>